<dbReference type="EMBL" id="AE017196">
    <property type="protein sequence ID" value="AAS14358.1"/>
    <property type="molecule type" value="Genomic_DNA"/>
</dbReference>
<dbReference type="RefSeq" id="WP_010962745.1">
    <property type="nucleotide sequence ID" value="NZ_OX384529.1"/>
</dbReference>
<dbReference type="SMR" id="Q73HA7"/>
<dbReference type="EnsemblBacteria" id="AAS14358">
    <property type="protein sequence ID" value="AAS14358"/>
    <property type="gene ID" value="WD_0660"/>
</dbReference>
<dbReference type="GeneID" id="70036143"/>
<dbReference type="KEGG" id="wol:WD_0660"/>
<dbReference type="eggNOG" id="COG0099">
    <property type="taxonomic scope" value="Bacteria"/>
</dbReference>
<dbReference type="Proteomes" id="UP000008215">
    <property type="component" value="Chromosome"/>
</dbReference>
<dbReference type="GO" id="GO:0005829">
    <property type="term" value="C:cytosol"/>
    <property type="evidence" value="ECO:0007669"/>
    <property type="project" value="TreeGrafter"/>
</dbReference>
<dbReference type="GO" id="GO:0015935">
    <property type="term" value="C:small ribosomal subunit"/>
    <property type="evidence" value="ECO:0007669"/>
    <property type="project" value="TreeGrafter"/>
</dbReference>
<dbReference type="GO" id="GO:0019843">
    <property type="term" value="F:rRNA binding"/>
    <property type="evidence" value="ECO:0007669"/>
    <property type="project" value="UniProtKB-UniRule"/>
</dbReference>
<dbReference type="GO" id="GO:0003735">
    <property type="term" value="F:structural constituent of ribosome"/>
    <property type="evidence" value="ECO:0007669"/>
    <property type="project" value="InterPro"/>
</dbReference>
<dbReference type="GO" id="GO:0000049">
    <property type="term" value="F:tRNA binding"/>
    <property type="evidence" value="ECO:0007669"/>
    <property type="project" value="UniProtKB-UniRule"/>
</dbReference>
<dbReference type="GO" id="GO:0006412">
    <property type="term" value="P:translation"/>
    <property type="evidence" value="ECO:0007669"/>
    <property type="project" value="UniProtKB-UniRule"/>
</dbReference>
<dbReference type="FunFam" id="1.10.8.50:FF:000001">
    <property type="entry name" value="30S ribosomal protein S13"/>
    <property type="match status" value="1"/>
</dbReference>
<dbReference type="FunFam" id="4.10.910.10:FF:000001">
    <property type="entry name" value="30S ribosomal protein S13"/>
    <property type="match status" value="1"/>
</dbReference>
<dbReference type="Gene3D" id="1.10.8.50">
    <property type="match status" value="1"/>
</dbReference>
<dbReference type="Gene3D" id="4.10.910.10">
    <property type="entry name" value="30s ribosomal protein s13, domain 2"/>
    <property type="match status" value="1"/>
</dbReference>
<dbReference type="HAMAP" id="MF_01315">
    <property type="entry name" value="Ribosomal_uS13"/>
    <property type="match status" value="1"/>
</dbReference>
<dbReference type="InterPro" id="IPR027437">
    <property type="entry name" value="Rbsml_uS13_C"/>
</dbReference>
<dbReference type="InterPro" id="IPR001892">
    <property type="entry name" value="Ribosomal_uS13"/>
</dbReference>
<dbReference type="InterPro" id="IPR010979">
    <property type="entry name" value="Ribosomal_uS13-like_H2TH"/>
</dbReference>
<dbReference type="InterPro" id="IPR019980">
    <property type="entry name" value="Ribosomal_uS13_bac-type"/>
</dbReference>
<dbReference type="InterPro" id="IPR018269">
    <property type="entry name" value="Ribosomal_uS13_CS"/>
</dbReference>
<dbReference type="NCBIfam" id="TIGR03631">
    <property type="entry name" value="uS13_bact"/>
    <property type="match status" value="1"/>
</dbReference>
<dbReference type="PANTHER" id="PTHR10871">
    <property type="entry name" value="30S RIBOSOMAL PROTEIN S13/40S RIBOSOMAL PROTEIN S18"/>
    <property type="match status" value="1"/>
</dbReference>
<dbReference type="PANTHER" id="PTHR10871:SF1">
    <property type="entry name" value="SMALL RIBOSOMAL SUBUNIT PROTEIN US13M"/>
    <property type="match status" value="1"/>
</dbReference>
<dbReference type="Pfam" id="PF00416">
    <property type="entry name" value="Ribosomal_S13"/>
    <property type="match status" value="1"/>
</dbReference>
<dbReference type="PIRSF" id="PIRSF002134">
    <property type="entry name" value="Ribosomal_S13"/>
    <property type="match status" value="1"/>
</dbReference>
<dbReference type="SUPFAM" id="SSF46946">
    <property type="entry name" value="S13-like H2TH domain"/>
    <property type="match status" value="1"/>
</dbReference>
<dbReference type="PROSITE" id="PS00646">
    <property type="entry name" value="RIBOSOMAL_S13_1"/>
    <property type="match status" value="1"/>
</dbReference>
<dbReference type="PROSITE" id="PS50159">
    <property type="entry name" value="RIBOSOMAL_S13_2"/>
    <property type="match status" value="1"/>
</dbReference>
<proteinExistence type="inferred from homology"/>
<organism>
    <name type="scientific">Wolbachia pipientis wMel</name>
    <dbReference type="NCBI Taxonomy" id="163164"/>
    <lineage>
        <taxon>Bacteria</taxon>
        <taxon>Pseudomonadati</taxon>
        <taxon>Pseudomonadota</taxon>
        <taxon>Alphaproteobacteria</taxon>
        <taxon>Rickettsiales</taxon>
        <taxon>Anaplasmataceae</taxon>
        <taxon>Wolbachieae</taxon>
        <taxon>Wolbachia</taxon>
    </lineage>
</organism>
<protein>
    <recommendedName>
        <fullName evidence="1">Small ribosomal subunit protein uS13</fullName>
    </recommendedName>
    <alternativeName>
        <fullName evidence="3">30S ribosomal protein S13</fullName>
    </alternativeName>
</protein>
<name>RS13_WOLPM</name>
<accession>Q73HA7</accession>
<comment type="function">
    <text evidence="1">Located at the top of the head of the 30S subunit, it contacts several helices of the 16S rRNA. In the 70S ribosome it contacts the 23S rRNA (bridge B1a) and protein L5 of the 50S subunit (bridge B1b), connecting the 2 subunits; these bridges are implicated in subunit movement. Contacts the tRNAs in the A and P-sites.</text>
</comment>
<comment type="subunit">
    <text evidence="1">Part of the 30S ribosomal subunit. Forms a loose heterodimer with protein S19. Forms two bridges to the 50S subunit in the 70S ribosome.</text>
</comment>
<comment type="similarity">
    <text evidence="1">Belongs to the universal ribosomal protein uS13 family.</text>
</comment>
<keyword id="KW-0687">Ribonucleoprotein</keyword>
<keyword id="KW-0689">Ribosomal protein</keyword>
<keyword id="KW-0694">RNA-binding</keyword>
<keyword id="KW-0699">rRNA-binding</keyword>
<keyword id="KW-0820">tRNA-binding</keyword>
<reference key="1">
    <citation type="journal article" date="2004" name="PLoS Biol.">
        <title>Phylogenomics of the reproductive parasite Wolbachia pipientis wMel: a streamlined genome overrun by mobile genetic elements.</title>
        <authorList>
            <person name="Wu M."/>
            <person name="Sun L.V."/>
            <person name="Vamathevan J.J."/>
            <person name="Riegler M."/>
            <person name="DeBoy R.T."/>
            <person name="Brownlie J.C."/>
            <person name="McGraw E.A."/>
            <person name="Martin W."/>
            <person name="Esser C."/>
            <person name="Ahmadinejad N."/>
            <person name="Wiegand C."/>
            <person name="Madupu R."/>
            <person name="Beanan M.J."/>
            <person name="Brinkac L.M."/>
            <person name="Daugherty S.C."/>
            <person name="Durkin A.S."/>
            <person name="Kolonay J.F."/>
            <person name="Nelson W.C."/>
            <person name="Mohamoud Y."/>
            <person name="Lee P."/>
            <person name="Berry K.J."/>
            <person name="Young M.B."/>
            <person name="Utterback T.R."/>
            <person name="Weidman J.F."/>
            <person name="Nierman W.C."/>
            <person name="Paulsen I.T."/>
            <person name="Nelson K.E."/>
            <person name="Tettelin H."/>
            <person name="O'Neill S.L."/>
            <person name="Eisen J.A."/>
        </authorList>
    </citation>
    <scope>NUCLEOTIDE SEQUENCE [LARGE SCALE GENOMIC DNA]</scope>
</reference>
<gene>
    <name evidence="1" type="primary">rpsM</name>
    <name type="ordered locus">WD_0660</name>
</gene>
<feature type="chain" id="PRO_0000306742" description="Small ribosomal subunit protein uS13">
    <location>
        <begin position="1"/>
        <end position="122"/>
    </location>
</feature>
<feature type="region of interest" description="Disordered" evidence="2">
    <location>
        <begin position="97"/>
        <end position="122"/>
    </location>
</feature>
<sequence length="122" mass="13791">MARIAGINIPVRKCVPFALTYIYGIGIATANVICHACEVDKRKRVSELRDEDIEKISGFIRQNYVIEGELRKEVAMNIKSLVEMGCYRGVRHRKGLPVRGQRTHTNAKTRKGRSRLPIAGKK</sequence>
<evidence type="ECO:0000255" key="1">
    <source>
        <dbReference type="HAMAP-Rule" id="MF_01315"/>
    </source>
</evidence>
<evidence type="ECO:0000256" key="2">
    <source>
        <dbReference type="SAM" id="MobiDB-lite"/>
    </source>
</evidence>
<evidence type="ECO:0000305" key="3"/>